<proteinExistence type="inferred from homology"/>
<reference key="1">
    <citation type="journal article" date="2003" name="Proc. Natl. Acad. Sci. U.S.A.">
        <title>The complete genome sequence of the Arabidopsis and tomato pathogen Pseudomonas syringae pv. tomato DC3000.</title>
        <authorList>
            <person name="Buell C.R."/>
            <person name="Joardar V."/>
            <person name="Lindeberg M."/>
            <person name="Selengut J."/>
            <person name="Paulsen I.T."/>
            <person name="Gwinn M.L."/>
            <person name="Dodson R.J."/>
            <person name="DeBoy R.T."/>
            <person name="Durkin A.S."/>
            <person name="Kolonay J.F."/>
            <person name="Madupu R."/>
            <person name="Daugherty S.C."/>
            <person name="Brinkac L.M."/>
            <person name="Beanan M.J."/>
            <person name="Haft D.H."/>
            <person name="Nelson W.C."/>
            <person name="Davidsen T.M."/>
            <person name="Zafar N."/>
            <person name="Zhou L."/>
            <person name="Liu J."/>
            <person name="Yuan Q."/>
            <person name="Khouri H.M."/>
            <person name="Fedorova N.B."/>
            <person name="Tran B."/>
            <person name="Russell D."/>
            <person name="Berry K.J."/>
            <person name="Utterback T.R."/>
            <person name="Van Aken S.E."/>
            <person name="Feldblyum T.V."/>
            <person name="D'Ascenzo M."/>
            <person name="Deng W.-L."/>
            <person name="Ramos A.R."/>
            <person name="Alfano J.R."/>
            <person name="Cartinhour S."/>
            <person name="Chatterjee A.K."/>
            <person name="Delaney T.P."/>
            <person name="Lazarowitz S.G."/>
            <person name="Martin G.B."/>
            <person name="Schneider D.J."/>
            <person name="Tang X."/>
            <person name="Bender C.L."/>
            <person name="White O."/>
            <person name="Fraser C.M."/>
            <person name="Collmer A."/>
        </authorList>
    </citation>
    <scope>NUCLEOTIDE SEQUENCE [LARGE SCALE GENOMIC DNA]</scope>
    <source>
        <strain>ATCC BAA-871 / DC3000</strain>
    </source>
</reference>
<evidence type="ECO:0000255" key="1">
    <source>
        <dbReference type="HAMAP-Rule" id="MF_00595"/>
    </source>
</evidence>
<gene>
    <name evidence="1" type="primary">ppc</name>
    <name type="ordered locus">PSPTO_1508</name>
</gene>
<protein>
    <recommendedName>
        <fullName evidence="1">Phosphoenolpyruvate carboxylase</fullName>
        <shortName evidence="1">PEPC</shortName>
        <shortName evidence="1">PEPCase</shortName>
        <ecNumber evidence="1">4.1.1.31</ecNumber>
    </recommendedName>
</protein>
<comment type="function">
    <text evidence="1">Forms oxaloacetate, a four-carbon dicarboxylic acid source for the tricarboxylic acid cycle.</text>
</comment>
<comment type="catalytic activity">
    <reaction evidence="1">
        <text>oxaloacetate + phosphate = phosphoenolpyruvate + hydrogencarbonate</text>
        <dbReference type="Rhea" id="RHEA:28370"/>
        <dbReference type="ChEBI" id="CHEBI:16452"/>
        <dbReference type="ChEBI" id="CHEBI:17544"/>
        <dbReference type="ChEBI" id="CHEBI:43474"/>
        <dbReference type="ChEBI" id="CHEBI:58702"/>
        <dbReference type="EC" id="4.1.1.31"/>
    </reaction>
</comment>
<comment type="cofactor">
    <cofactor evidence="1">
        <name>Mg(2+)</name>
        <dbReference type="ChEBI" id="CHEBI:18420"/>
    </cofactor>
</comment>
<comment type="similarity">
    <text evidence="1">Belongs to the PEPCase type 1 family.</text>
</comment>
<name>CAPP_PSESM</name>
<sequence length="878" mass="97649">MADIDARLREDVHLLGELLGNTIREQRGAEFLDKIERIRKGAKAGRRGSAEGAEQLSSSVDGLEDDELLPVARAFNQFLNLANIAEQYQLMHRRDDAQPLPFESRVLSELLDRLKAEGHQPETLARQLSKLEIELVLTAHPTEVARRTLIQKYDAIATQLAALDHRDLNSAERAQITSRLQRLIAEAWHTEEIRRIRPTPVDEAKWGFAVIEHSLWHAIPNYLRKADHVLHAATGLHLPLESAPIRFASWMGGDRDGNPNVTAAVTREVLLLARWMAADLYLRDVDNLAAELSMQQASDALRASVGDSAEPYRAELKRLRERLRATRNWANASLTETLPAPEAVLRDNRELLDPLLLCFQSLHECGMGVIADGPLLDCLRRAVTFGLFLVRLDVRQDSTRHCAAMTEITDYLGLGRYEEWDEQTRIDFLLRELNNRRPLLPSYFKPAADTAEVLATCREVAAAPAASLGSYVISMAGSASDVLAVQLLLKESGLQRPMRVVPLFETLADLDNAGPVIETLLGLPGYRSRLQGPQEVMIGYSDSAKDAGTTAAAWAQYRAQEKLVEICREQQVELLLFHGRGGTVGRGGGPAHAAILSQPPGSVAGRFRTTEQGEMIRFKFGLPDIAEQNLNLYLAAVLEATLLPPPPPQPAWRTMMDQMASDGVSAYRAVVRENPEFVEYFRQATPEQELGRLPLGSRPAKRREGGVESLRAIPWIFAWTQTRLMLPAWLGWEAALSKALERGEGEVLAQMREQWPFFRTRIDMLEMVLAKADADIARLYDERLVTAELQHLGAHLRDLLSQACNVVLGLTGQTQLLAHSPETLEFISLRNAYLDPLHLLQAELLSRSRNREASLDSPLELALLVSVAGIAAGLRNTG</sequence>
<keyword id="KW-0120">Carbon dioxide fixation</keyword>
<keyword id="KW-0456">Lyase</keyword>
<keyword id="KW-0460">Magnesium</keyword>
<keyword id="KW-1185">Reference proteome</keyword>
<feature type="chain" id="PRO_0000166615" description="Phosphoenolpyruvate carboxylase">
    <location>
        <begin position="1"/>
        <end position="878"/>
    </location>
</feature>
<feature type="active site" evidence="1">
    <location>
        <position position="140"/>
    </location>
</feature>
<feature type="active site" evidence="1">
    <location>
        <position position="545"/>
    </location>
</feature>
<organism>
    <name type="scientific">Pseudomonas syringae pv. tomato (strain ATCC BAA-871 / DC3000)</name>
    <dbReference type="NCBI Taxonomy" id="223283"/>
    <lineage>
        <taxon>Bacteria</taxon>
        <taxon>Pseudomonadati</taxon>
        <taxon>Pseudomonadota</taxon>
        <taxon>Gammaproteobacteria</taxon>
        <taxon>Pseudomonadales</taxon>
        <taxon>Pseudomonadaceae</taxon>
        <taxon>Pseudomonas</taxon>
    </lineage>
</organism>
<dbReference type="EC" id="4.1.1.31" evidence="1"/>
<dbReference type="EMBL" id="AE016853">
    <property type="protein sequence ID" value="AAO55028.1"/>
    <property type="molecule type" value="Genomic_DNA"/>
</dbReference>
<dbReference type="RefSeq" id="NP_791333.1">
    <property type="nucleotide sequence ID" value="NC_004578.1"/>
</dbReference>
<dbReference type="RefSeq" id="WP_011103582.1">
    <property type="nucleotide sequence ID" value="NC_004578.1"/>
</dbReference>
<dbReference type="SMR" id="Q886R9"/>
<dbReference type="STRING" id="223283.PSPTO_1508"/>
<dbReference type="GeneID" id="1183145"/>
<dbReference type="KEGG" id="pst:PSPTO_1508"/>
<dbReference type="PATRIC" id="fig|223283.9.peg.1529"/>
<dbReference type="eggNOG" id="COG2352">
    <property type="taxonomic scope" value="Bacteria"/>
</dbReference>
<dbReference type="HOGENOM" id="CLU_006557_2_0_6"/>
<dbReference type="OrthoDB" id="9768133at2"/>
<dbReference type="PhylomeDB" id="Q886R9"/>
<dbReference type="Proteomes" id="UP000002515">
    <property type="component" value="Chromosome"/>
</dbReference>
<dbReference type="GO" id="GO:0005829">
    <property type="term" value="C:cytosol"/>
    <property type="evidence" value="ECO:0007669"/>
    <property type="project" value="TreeGrafter"/>
</dbReference>
<dbReference type="GO" id="GO:0000287">
    <property type="term" value="F:magnesium ion binding"/>
    <property type="evidence" value="ECO:0007669"/>
    <property type="project" value="UniProtKB-UniRule"/>
</dbReference>
<dbReference type="GO" id="GO:0008964">
    <property type="term" value="F:phosphoenolpyruvate carboxylase activity"/>
    <property type="evidence" value="ECO:0007669"/>
    <property type="project" value="UniProtKB-UniRule"/>
</dbReference>
<dbReference type="GO" id="GO:0015977">
    <property type="term" value="P:carbon fixation"/>
    <property type="evidence" value="ECO:0007669"/>
    <property type="project" value="UniProtKB-UniRule"/>
</dbReference>
<dbReference type="GO" id="GO:0006107">
    <property type="term" value="P:oxaloacetate metabolic process"/>
    <property type="evidence" value="ECO:0007669"/>
    <property type="project" value="UniProtKB-UniRule"/>
</dbReference>
<dbReference type="GO" id="GO:0006099">
    <property type="term" value="P:tricarboxylic acid cycle"/>
    <property type="evidence" value="ECO:0007669"/>
    <property type="project" value="InterPro"/>
</dbReference>
<dbReference type="Gene3D" id="1.20.1440.90">
    <property type="entry name" value="Phosphoenolpyruvate/pyruvate domain"/>
    <property type="match status" value="1"/>
</dbReference>
<dbReference type="HAMAP" id="MF_00595">
    <property type="entry name" value="PEPcase_type1"/>
    <property type="match status" value="1"/>
</dbReference>
<dbReference type="InterPro" id="IPR021135">
    <property type="entry name" value="PEP_COase"/>
</dbReference>
<dbReference type="InterPro" id="IPR022805">
    <property type="entry name" value="PEP_COase_bac/pln-type"/>
</dbReference>
<dbReference type="InterPro" id="IPR018129">
    <property type="entry name" value="PEP_COase_Lys_AS"/>
</dbReference>
<dbReference type="InterPro" id="IPR033129">
    <property type="entry name" value="PEPCASE_His_AS"/>
</dbReference>
<dbReference type="InterPro" id="IPR015813">
    <property type="entry name" value="Pyrv/PenolPyrv_kinase-like_dom"/>
</dbReference>
<dbReference type="NCBIfam" id="NF000584">
    <property type="entry name" value="PRK00009.1"/>
    <property type="match status" value="1"/>
</dbReference>
<dbReference type="PANTHER" id="PTHR30523">
    <property type="entry name" value="PHOSPHOENOLPYRUVATE CARBOXYLASE"/>
    <property type="match status" value="1"/>
</dbReference>
<dbReference type="PANTHER" id="PTHR30523:SF6">
    <property type="entry name" value="PHOSPHOENOLPYRUVATE CARBOXYLASE"/>
    <property type="match status" value="1"/>
</dbReference>
<dbReference type="Pfam" id="PF00311">
    <property type="entry name" value="PEPcase"/>
    <property type="match status" value="1"/>
</dbReference>
<dbReference type="PRINTS" id="PR00150">
    <property type="entry name" value="PEPCARBXLASE"/>
</dbReference>
<dbReference type="SUPFAM" id="SSF51621">
    <property type="entry name" value="Phosphoenolpyruvate/pyruvate domain"/>
    <property type="match status" value="1"/>
</dbReference>
<dbReference type="PROSITE" id="PS00781">
    <property type="entry name" value="PEPCASE_1"/>
    <property type="match status" value="1"/>
</dbReference>
<dbReference type="PROSITE" id="PS00393">
    <property type="entry name" value="PEPCASE_2"/>
    <property type="match status" value="1"/>
</dbReference>
<accession>Q886R9</accession>